<evidence type="ECO:0000255" key="1">
    <source>
        <dbReference type="HAMAP-Rule" id="MF_00405"/>
    </source>
</evidence>
<comment type="function">
    <text evidence="1">Necessary for the introduction of cis unsaturation into fatty acids. Catalyzes the dehydration of (3R)-3-hydroxydecanoyl-ACP to E-(2)-decenoyl-ACP and then its isomerization to Z-(3)-decenoyl-ACP. Can catalyze the dehydratase reaction for beta-hydroxyacyl-ACPs with saturated chain lengths up to 16:0, being most active on intermediate chain length.</text>
</comment>
<comment type="catalytic activity">
    <reaction evidence="1">
        <text>a (3R)-hydroxyacyl-[ACP] = a (2E)-enoyl-[ACP] + H2O</text>
        <dbReference type="Rhea" id="RHEA:13097"/>
        <dbReference type="Rhea" id="RHEA-COMP:9925"/>
        <dbReference type="Rhea" id="RHEA-COMP:9945"/>
        <dbReference type="ChEBI" id="CHEBI:15377"/>
        <dbReference type="ChEBI" id="CHEBI:78784"/>
        <dbReference type="ChEBI" id="CHEBI:78827"/>
        <dbReference type="EC" id="4.2.1.59"/>
    </reaction>
</comment>
<comment type="catalytic activity">
    <reaction evidence="1">
        <text>(3R)-hydroxydecanoyl-[ACP] = (2E)-decenoyl-[ACP] + H2O</text>
        <dbReference type="Rhea" id="RHEA:41860"/>
        <dbReference type="Rhea" id="RHEA-COMP:9638"/>
        <dbReference type="Rhea" id="RHEA-COMP:9639"/>
        <dbReference type="ChEBI" id="CHEBI:15377"/>
        <dbReference type="ChEBI" id="CHEBI:78466"/>
        <dbReference type="ChEBI" id="CHEBI:78467"/>
    </reaction>
</comment>
<comment type="catalytic activity">
    <reaction evidence="1">
        <text>(2E)-decenoyl-[ACP] = (3Z)-decenoyl-[ACP]</text>
        <dbReference type="Rhea" id="RHEA:23568"/>
        <dbReference type="Rhea" id="RHEA-COMP:9639"/>
        <dbReference type="Rhea" id="RHEA-COMP:9927"/>
        <dbReference type="ChEBI" id="CHEBI:78467"/>
        <dbReference type="ChEBI" id="CHEBI:78798"/>
        <dbReference type="EC" id="5.3.3.14"/>
    </reaction>
</comment>
<comment type="pathway">
    <text evidence="1">Lipid metabolism; fatty acid biosynthesis.</text>
</comment>
<comment type="subunit">
    <text evidence="1">Homodimer.</text>
</comment>
<comment type="subcellular location">
    <subcellularLocation>
        <location evidence="1">Cytoplasm</location>
    </subcellularLocation>
</comment>
<comment type="similarity">
    <text evidence="1">Belongs to the thioester dehydratase family. FabA subfamily.</text>
</comment>
<dbReference type="EC" id="4.2.1.59" evidence="1"/>
<dbReference type="EC" id="5.3.3.14" evidence="1"/>
<dbReference type="EMBL" id="BA000021">
    <property type="protein sequence ID" value="BAC24446.1"/>
    <property type="molecule type" value="Genomic_DNA"/>
</dbReference>
<dbReference type="SMR" id="Q8D2Q4"/>
<dbReference type="STRING" id="36870.gene:10368793"/>
<dbReference type="KEGG" id="wbr:fabA"/>
<dbReference type="eggNOG" id="COG0764">
    <property type="taxonomic scope" value="Bacteria"/>
</dbReference>
<dbReference type="HOGENOM" id="CLU_097925_0_0_6"/>
<dbReference type="OrthoDB" id="9786735at2"/>
<dbReference type="UniPathway" id="UPA00094"/>
<dbReference type="Proteomes" id="UP000000562">
    <property type="component" value="Chromosome"/>
</dbReference>
<dbReference type="GO" id="GO:0005737">
    <property type="term" value="C:cytoplasm"/>
    <property type="evidence" value="ECO:0007669"/>
    <property type="project" value="UniProtKB-SubCell"/>
</dbReference>
<dbReference type="GO" id="GO:0019171">
    <property type="term" value="F:(3R)-hydroxyacyl-[acyl-carrier-protein] dehydratase activity"/>
    <property type="evidence" value="ECO:0007669"/>
    <property type="project" value="UniProtKB-UniRule"/>
</dbReference>
<dbReference type="GO" id="GO:0034017">
    <property type="term" value="F:trans-2-decenoyl-acyl-carrier-protein isomerase activity"/>
    <property type="evidence" value="ECO:0007669"/>
    <property type="project" value="UniProtKB-UniRule"/>
</dbReference>
<dbReference type="GO" id="GO:0006636">
    <property type="term" value="P:unsaturated fatty acid biosynthetic process"/>
    <property type="evidence" value="ECO:0007669"/>
    <property type="project" value="UniProtKB-UniRule"/>
</dbReference>
<dbReference type="Gene3D" id="3.10.129.10">
    <property type="entry name" value="Hotdog Thioesterase"/>
    <property type="match status" value="1"/>
</dbReference>
<dbReference type="HAMAP" id="MF_00405">
    <property type="entry name" value="FabA"/>
    <property type="match status" value="1"/>
</dbReference>
<dbReference type="InterPro" id="IPR010083">
    <property type="entry name" value="FabA"/>
</dbReference>
<dbReference type="InterPro" id="IPR013114">
    <property type="entry name" value="FabA_FabZ"/>
</dbReference>
<dbReference type="InterPro" id="IPR029069">
    <property type="entry name" value="HotDog_dom_sf"/>
</dbReference>
<dbReference type="NCBIfam" id="TIGR01749">
    <property type="entry name" value="fabA"/>
    <property type="match status" value="1"/>
</dbReference>
<dbReference type="NCBIfam" id="NF003509">
    <property type="entry name" value="PRK05174.1"/>
    <property type="match status" value="1"/>
</dbReference>
<dbReference type="PANTHER" id="PTHR30272">
    <property type="entry name" value="3-HYDROXYACYL-[ACYL-CARRIER-PROTEIN] DEHYDRATASE"/>
    <property type="match status" value="1"/>
</dbReference>
<dbReference type="PANTHER" id="PTHR30272:SF8">
    <property type="entry name" value="3-HYDROXYDECANOYL-[ACYL-CARRIER-PROTEIN] DEHYDRATASE"/>
    <property type="match status" value="1"/>
</dbReference>
<dbReference type="Pfam" id="PF07977">
    <property type="entry name" value="FabA"/>
    <property type="match status" value="1"/>
</dbReference>
<dbReference type="SUPFAM" id="SSF54637">
    <property type="entry name" value="Thioesterase/thiol ester dehydrase-isomerase"/>
    <property type="match status" value="1"/>
</dbReference>
<protein>
    <recommendedName>
        <fullName evidence="1">3-hydroxydecanoyl-[acyl-carrier-protein] dehydratase</fullName>
        <ecNumber evidence="1">4.2.1.59</ecNumber>
    </recommendedName>
    <alternativeName>
        <fullName evidence="1">3-hydroxyacyl-[acyl-carrier-protein] dehydratase FabA</fullName>
    </alternativeName>
    <alternativeName>
        <fullName evidence="1">Beta-hydroxydecanoyl thioester dehydrase</fullName>
    </alternativeName>
    <alternativeName>
        <fullName evidence="1">Trans-2-decenoyl-[acyl-carrier-protein] isomerase</fullName>
        <ecNumber evidence="1">5.3.3.14</ecNumber>
    </alternativeName>
</protein>
<sequence>MVKKHKFYTKEDLLCSSRGELFGKYGPQLPAPNMLMIDRLVKVTENGGNYNKGFIKAELDINPNMWFFSCHFIGDPVMPGCLGLDAMWQLVGFYLGWLGGKGKGRALGVREVKFSGQILPTSKIVVYYIHFRRIINRKLFMGMADGEVFCDGKIIYTANDLKVGLFQDITSFKKDFK</sequence>
<proteinExistence type="inferred from homology"/>
<feature type="chain" id="PRO_0000091621" description="3-hydroxydecanoyl-[acyl-carrier-protein] dehydratase">
    <location>
        <begin position="1"/>
        <end position="177"/>
    </location>
</feature>
<feature type="active site" evidence="1">
    <location>
        <position position="71"/>
    </location>
</feature>
<organism>
    <name type="scientific">Wigglesworthia glossinidia brevipalpis</name>
    <dbReference type="NCBI Taxonomy" id="36870"/>
    <lineage>
        <taxon>Bacteria</taxon>
        <taxon>Pseudomonadati</taxon>
        <taxon>Pseudomonadota</taxon>
        <taxon>Gammaproteobacteria</taxon>
        <taxon>Enterobacterales</taxon>
        <taxon>Erwiniaceae</taxon>
        <taxon>Wigglesworthia</taxon>
    </lineage>
</organism>
<reference key="1">
    <citation type="journal article" date="2002" name="Nat. Genet.">
        <title>Genome sequence of the endocellular obligate symbiont of tsetse flies, Wigglesworthia glossinidia.</title>
        <authorList>
            <person name="Akman L."/>
            <person name="Yamashita A."/>
            <person name="Watanabe H."/>
            <person name="Oshima K."/>
            <person name="Shiba T."/>
            <person name="Hattori M."/>
            <person name="Aksoy S."/>
        </authorList>
    </citation>
    <scope>NUCLEOTIDE SEQUENCE [LARGE SCALE GENOMIC DNA]</scope>
</reference>
<keyword id="KW-0963">Cytoplasm</keyword>
<keyword id="KW-0275">Fatty acid biosynthesis</keyword>
<keyword id="KW-0276">Fatty acid metabolism</keyword>
<keyword id="KW-0413">Isomerase</keyword>
<keyword id="KW-0444">Lipid biosynthesis</keyword>
<keyword id="KW-0443">Lipid metabolism</keyword>
<keyword id="KW-0456">Lyase</keyword>
<keyword id="KW-1185">Reference proteome</keyword>
<accession>Q8D2Q4</accession>
<name>FABA_WIGBR</name>
<gene>
    <name evidence="1" type="primary">fabA</name>
    <name type="ordered locus">WIGBR3000</name>
</gene>